<accession>Q1CII0</accession>
<gene>
    <name evidence="1" type="primary">arnE</name>
    <name type="ordered locus">YPN_1871</name>
    <name type="ORF">YP516_2082</name>
</gene>
<protein>
    <recommendedName>
        <fullName evidence="1">Probable 4-amino-4-deoxy-L-arabinose-phosphoundecaprenol flippase subunit ArnE</fullName>
        <shortName evidence="1">L-Ara4N-phosphoundecaprenol flippase subunit ArnE</shortName>
    </recommendedName>
    <alternativeName>
        <fullName evidence="1">Undecaprenyl phosphate-aminoarabinose flippase subunit ArnE</fullName>
    </alternativeName>
</protein>
<feature type="chain" id="PRO_0000383016" description="Probable 4-amino-4-deoxy-L-arabinose-phosphoundecaprenol flippase subunit ArnE">
    <location>
        <begin position="1"/>
        <end position="114"/>
    </location>
</feature>
<feature type="transmembrane region" description="Helical" evidence="1">
    <location>
        <begin position="38"/>
        <end position="58"/>
    </location>
</feature>
<feature type="transmembrane region" description="Helical" evidence="1">
    <location>
        <begin position="64"/>
        <end position="84"/>
    </location>
</feature>
<feature type="transmembrane region" description="Helical" evidence="1">
    <location>
        <begin position="94"/>
        <end position="114"/>
    </location>
</feature>
<feature type="domain" description="EamA" evidence="1">
    <location>
        <begin position="43"/>
        <end position="112"/>
    </location>
</feature>
<proteinExistence type="inferred from homology"/>
<comment type="function">
    <text evidence="1">Translocates 4-amino-4-deoxy-L-arabinose-phosphoundecaprenol (alpha-L-Ara4N-phosphoundecaprenol) from the cytoplasmic to the periplasmic side of the inner membrane.</text>
</comment>
<comment type="pathway">
    <text evidence="1">Bacterial outer membrane biogenesis; lipopolysaccharide biosynthesis.</text>
</comment>
<comment type="subunit">
    <text evidence="1">Heterodimer of ArnE and ArnF.</text>
</comment>
<comment type="subcellular location">
    <subcellularLocation>
        <location evidence="1">Cell inner membrane</location>
        <topology evidence="1">Multi-pass membrane protein</topology>
    </subcellularLocation>
</comment>
<comment type="similarity">
    <text evidence="1">Belongs to the ArnE family.</text>
</comment>
<dbReference type="EMBL" id="CP000305">
    <property type="protein sequence ID" value="ABG18200.1"/>
    <property type="molecule type" value="Genomic_DNA"/>
</dbReference>
<dbReference type="EMBL" id="ACNQ01000010">
    <property type="protein sequence ID" value="EEO76775.1"/>
    <property type="molecule type" value="Genomic_DNA"/>
</dbReference>
<dbReference type="RefSeq" id="WP_002211820.1">
    <property type="nucleotide sequence ID" value="NZ_ACNQ01000010.1"/>
</dbReference>
<dbReference type="SMR" id="Q1CII0"/>
<dbReference type="GeneID" id="57976260"/>
<dbReference type="KEGG" id="ypn:YPN_1871"/>
<dbReference type="HOGENOM" id="CLU_131462_5_1_6"/>
<dbReference type="UniPathway" id="UPA00030"/>
<dbReference type="Proteomes" id="UP000008936">
    <property type="component" value="Chromosome"/>
</dbReference>
<dbReference type="GO" id="GO:0005886">
    <property type="term" value="C:plasma membrane"/>
    <property type="evidence" value="ECO:0007669"/>
    <property type="project" value="UniProtKB-SubCell"/>
</dbReference>
<dbReference type="GO" id="GO:1901505">
    <property type="term" value="F:carbohydrate derivative transmembrane transporter activity"/>
    <property type="evidence" value="ECO:0007669"/>
    <property type="project" value="InterPro"/>
</dbReference>
<dbReference type="GO" id="GO:0009245">
    <property type="term" value="P:lipid A biosynthetic process"/>
    <property type="evidence" value="ECO:0007669"/>
    <property type="project" value="UniProtKB-UniRule"/>
</dbReference>
<dbReference type="GO" id="GO:0009103">
    <property type="term" value="P:lipopolysaccharide biosynthetic process"/>
    <property type="evidence" value="ECO:0007669"/>
    <property type="project" value="UniProtKB-UniRule"/>
</dbReference>
<dbReference type="FunFam" id="1.10.3730.20:FF:000002">
    <property type="entry name" value="Probable 4-amino-4-deoxy-L-arabinose-phosphoundecaprenol flippase subunit ArnE"/>
    <property type="match status" value="1"/>
</dbReference>
<dbReference type="Gene3D" id="1.10.3730.20">
    <property type="match status" value="1"/>
</dbReference>
<dbReference type="HAMAP" id="MF_01869">
    <property type="entry name" value="Flippase_ArnE"/>
    <property type="match status" value="1"/>
</dbReference>
<dbReference type="InterPro" id="IPR000620">
    <property type="entry name" value="EamA_dom"/>
</dbReference>
<dbReference type="InterPro" id="IPR022883">
    <property type="entry name" value="Flippase_ArnE"/>
</dbReference>
<dbReference type="InterPro" id="IPR000390">
    <property type="entry name" value="Small_drug/metabolite_transptr"/>
</dbReference>
<dbReference type="NCBIfam" id="NF011625">
    <property type="entry name" value="PRK15051.1"/>
    <property type="match status" value="1"/>
</dbReference>
<dbReference type="PANTHER" id="PTHR30561:SF23">
    <property type="entry name" value="4-AMINO-4-DEOXY-L-ARABINOSE-PHOSPHOUNDECAPRENOL FLIPPASE SUBUNIT ARNE-RELATED"/>
    <property type="match status" value="1"/>
</dbReference>
<dbReference type="PANTHER" id="PTHR30561">
    <property type="entry name" value="SMR FAMILY PROTON-DEPENDENT DRUG EFFLUX TRANSPORTER SUGE"/>
    <property type="match status" value="1"/>
</dbReference>
<dbReference type="Pfam" id="PF00892">
    <property type="entry name" value="EamA"/>
    <property type="match status" value="1"/>
</dbReference>
<dbReference type="SUPFAM" id="SSF103481">
    <property type="entry name" value="Multidrug resistance efflux transporter EmrE"/>
    <property type="match status" value="1"/>
</dbReference>
<name>ARNE_YERPN</name>
<keyword id="KW-0997">Cell inner membrane</keyword>
<keyword id="KW-1003">Cell membrane</keyword>
<keyword id="KW-0441">Lipid A biosynthesis</keyword>
<keyword id="KW-0444">Lipid biosynthesis</keyword>
<keyword id="KW-0443">Lipid metabolism</keyword>
<keyword id="KW-0448">Lipopolysaccharide biosynthesis</keyword>
<keyword id="KW-0472">Membrane</keyword>
<keyword id="KW-0812">Transmembrane</keyword>
<keyword id="KW-1133">Transmembrane helix</keyword>
<keyword id="KW-0813">Transport</keyword>
<reference key="1">
    <citation type="journal article" date="2006" name="J. Bacteriol.">
        <title>Complete genome sequence of Yersinia pestis strains Antiqua and Nepal516: evidence of gene reduction in an emerging pathogen.</title>
        <authorList>
            <person name="Chain P.S.G."/>
            <person name="Hu P."/>
            <person name="Malfatti S.A."/>
            <person name="Radnedge L."/>
            <person name="Larimer F."/>
            <person name="Vergez L.M."/>
            <person name="Worsham P."/>
            <person name="Chu M.C."/>
            <person name="Andersen G.L."/>
        </authorList>
    </citation>
    <scope>NUCLEOTIDE SEQUENCE [LARGE SCALE GENOMIC DNA]</scope>
    <source>
        <strain>Nepal516</strain>
    </source>
</reference>
<reference key="2">
    <citation type="submission" date="2009-04" db="EMBL/GenBank/DDBJ databases">
        <title>Yersinia pestis Nepal516A whole genome shotgun sequencing project.</title>
        <authorList>
            <person name="Plunkett G. III"/>
            <person name="Anderson B.D."/>
            <person name="Baumler D.J."/>
            <person name="Burland V."/>
            <person name="Cabot E.L."/>
            <person name="Glasner J.D."/>
            <person name="Mau B."/>
            <person name="Neeno-Eckwall E."/>
            <person name="Perna N.T."/>
            <person name="Munk A.C."/>
            <person name="Tapia R."/>
            <person name="Green L.D."/>
            <person name="Rogers Y.C."/>
            <person name="Detter J.C."/>
            <person name="Bruce D.C."/>
            <person name="Brettin T.S."/>
        </authorList>
    </citation>
    <scope>NUCLEOTIDE SEQUENCE [LARGE SCALE GENOMIC DNA]</scope>
    <source>
        <strain>Nepal516</strain>
    </source>
</reference>
<evidence type="ECO:0000255" key="1">
    <source>
        <dbReference type="HAMAP-Rule" id="MF_01869"/>
    </source>
</evidence>
<organism>
    <name type="scientific">Yersinia pestis bv. Antiqua (strain Nepal516)</name>
    <dbReference type="NCBI Taxonomy" id="377628"/>
    <lineage>
        <taxon>Bacteria</taxon>
        <taxon>Pseudomonadati</taxon>
        <taxon>Pseudomonadota</taxon>
        <taxon>Gammaproteobacteria</taxon>
        <taxon>Enterobacterales</taxon>
        <taxon>Yersiniaceae</taxon>
        <taxon>Yersinia</taxon>
    </lineage>
</organism>
<sequence length="114" mass="12960">MNSYLLLLMVSLLTCIGQLCQKQAAQCWEQPQARRLNLTLRWLAIAVVSLGLGMLLWLRLLQQLPLSVAYPMLSFNFVLVTLAAQLFYGEKATLRHWLGVAAIMFGILLMSWHL</sequence>